<dbReference type="EC" id="3.2.1.23" evidence="4"/>
<dbReference type="EMBL" id="M57734">
    <property type="protein sequence ID" value="AAA37293.1"/>
    <property type="molecule type" value="mRNA"/>
</dbReference>
<dbReference type="EMBL" id="M75122">
    <property type="protein sequence ID" value="AAA37292.1"/>
    <property type="molecule type" value="Genomic_DNA"/>
</dbReference>
<dbReference type="EMBL" id="M75137">
    <property type="protein sequence ID" value="AAA37292.1"/>
    <property type="status" value="JOINED"/>
    <property type="molecule type" value="Genomic_DNA"/>
</dbReference>
<dbReference type="EMBL" id="M75107">
    <property type="protein sequence ID" value="AAA37292.1"/>
    <property type="status" value="JOINED"/>
    <property type="molecule type" value="Genomic_DNA"/>
</dbReference>
<dbReference type="EMBL" id="M75108">
    <property type="protein sequence ID" value="AAA37292.1"/>
    <property type="status" value="JOINED"/>
    <property type="molecule type" value="Genomic_DNA"/>
</dbReference>
<dbReference type="EMBL" id="M75109">
    <property type="protein sequence ID" value="AAA37292.1"/>
    <property type="status" value="JOINED"/>
    <property type="molecule type" value="Genomic_DNA"/>
</dbReference>
<dbReference type="EMBL" id="M75111">
    <property type="protein sequence ID" value="AAA37292.1"/>
    <property type="status" value="JOINED"/>
    <property type="molecule type" value="Genomic_DNA"/>
</dbReference>
<dbReference type="EMBL" id="M75112">
    <property type="protein sequence ID" value="AAA37292.1"/>
    <property type="status" value="JOINED"/>
    <property type="molecule type" value="Genomic_DNA"/>
</dbReference>
<dbReference type="EMBL" id="M75113">
    <property type="protein sequence ID" value="AAA37292.1"/>
    <property type="status" value="JOINED"/>
    <property type="molecule type" value="Genomic_DNA"/>
</dbReference>
<dbReference type="EMBL" id="M75114">
    <property type="protein sequence ID" value="AAA37292.1"/>
    <property type="status" value="JOINED"/>
    <property type="molecule type" value="Genomic_DNA"/>
</dbReference>
<dbReference type="EMBL" id="M75115">
    <property type="protein sequence ID" value="AAA37292.1"/>
    <property type="status" value="JOINED"/>
    <property type="molecule type" value="Genomic_DNA"/>
</dbReference>
<dbReference type="EMBL" id="M75116">
    <property type="protein sequence ID" value="AAA37292.1"/>
    <property type="status" value="JOINED"/>
    <property type="molecule type" value="Genomic_DNA"/>
</dbReference>
<dbReference type="EMBL" id="M75117">
    <property type="protein sequence ID" value="AAA37292.1"/>
    <property type="status" value="JOINED"/>
    <property type="molecule type" value="Genomic_DNA"/>
</dbReference>
<dbReference type="EMBL" id="M75118">
    <property type="protein sequence ID" value="AAA37292.1"/>
    <property type="status" value="JOINED"/>
    <property type="molecule type" value="Genomic_DNA"/>
</dbReference>
<dbReference type="EMBL" id="M75119">
    <property type="protein sequence ID" value="AAA37292.1"/>
    <property type="status" value="JOINED"/>
    <property type="molecule type" value="Genomic_DNA"/>
</dbReference>
<dbReference type="EMBL" id="M75120">
    <property type="protein sequence ID" value="AAA37292.1"/>
    <property type="status" value="JOINED"/>
    <property type="molecule type" value="Genomic_DNA"/>
</dbReference>
<dbReference type="EMBL" id="M75121">
    <property type="protein sequence ID" value="AAA37292.1"/>
    <property type="status" value="JOINED"/>
    <property type="molecule type" value="Genomic_DNA"/>
</dbReference>
<dbReference type="CCDS" id="CCDS23593.1"/>
<dbReference type="PIR" id="A37086">
    <property type="entry name" value="A37086"/>
</dbReference>
<dbReference type="RefSeq" id="NP_033882.1">
    <property type="nucleotide sequence ID" value="NM_009752.2"/>
</dbReference>
<dbReference type="PDB" id="7KDV">
    <property type="method" value="EM"/>
    <property type="resolution" value="4.59 A"/>
    <property type="chains" value="A/C/E/G/I/K=28-647"/>
</dbReference>
<dbReference type="PDBsum" id="7KDV"/>
<dbReference type="EMDB" id="EMD-22830"/>
<dbReference type="SMR" id="P23780"/>
<dbReference type="BioGRID" id="198341">
    <property type="interactions" value="13"/>
</dbReference>
<dbReference type="FunCoup" id="P23780">
    <property type="interactions" value="1767"/>
</dbReference>
<dbReference type="STRING" id="10090.ENSMUSP00000055803"/>
<dbReference type="BindingDB" id="P23780"/>
<dbReference type="ChEMBL" id="CHEMBL1667667"/>
<dbReference type="CAZy" id="GH35">
    <property type="family name" value="Glycoside Hydrolase Family 35"/>
</dbReference>
<dbReference type="GlyCosmos" id="P23780">
    <property type="glycosylation" value="8 sites, No reported glycans"/>
</dbReference>
<dbReference type="GlyGen" id="P23780">
    <property type="glycosylation" value="10 sites, 1 O-linked glycan (1 site)"/>
</dbReference>
<dbReference type="iPTMnet" id="P23780"/>
<dbReference type="PhosphoSitePlus" id="P23780"/>
<dbReference type="SwissPalm" id="P23780"/>
<dbReference type="jPOST" id="P23780"/>
<dbReference type="PaxDb" id="10090-ENSMUSP00000055803"/>
<dbReference type="PeptideAtlas" id="P23780"/>
<dbReference type="ProteomicsDB" id="273486"/>
<dbReference type="Pumba" id="P23780"/>
<dbReference type="Antibodypedia" id="3647">
    <property type="antibodies" value="703 antibodies from 38 providers"/>
</dbReference>
<dbReference type="DNASU" id="12091"/>
<dbReference type="Ensembl" id="ENSMUST00000063042.11">
    <property type="protein sequence ID" value="ENSMUSP00000055803.10"/>
    <property type="gene ID" value="ENSMUSG00000045594.11"/>
</dbReference>
<dbReference type="GeneID" id="12091"/>
<dbReference type="KEGG" id="mmu:12091"/>
<dbReference type="UCSC" id="uc009rxj.3">
    <property type="organism name" value="mouse"/>
</dbReference>
<dbReference type="AGR" id="MGI:88151"/>
<dbReference type="CTD" id="2720"/>
<dbReference type="MGI" id="MGI:88151">
    <property type="gene designation" value="Glb1"/>
</dbReference>
<dbReference type="VEuPathDB" id="HostDB:ENSMUSG00000045594"/>
<dbReference type="eggNOG" id="KOG0496">
    <property type="taxonomic scope" value="Eukaryota"/>
</dbReference>
<dbReference type="GeneTree" id="ENSGT00950000182942"/>
<dbReference type="HOGENOM" id="CLU_007853_7_2_1"/>
<dbReference type="InParanoid" id="P23780"/>
<dbReference type="OMA" id="FWNIHEQ"/>
<dbReference type="OrthoDB" id="1657402at2759"/>
<dbReference type="PhylomeDB" id="P23780"/>
<dbReference type="TreeFam" id="TF314816"/>
<dbReference type="Reactome" id="R-MMU-2022857">
    <property type="pathway name" value="Keratan sulfate degradation"/>
</dbReference>
<dbReference type="Reactome" id="R-MMU-2024096">
    <property type="pathway name" value="HS-GAG degradation"/>
</dbReference>
<dbReference type="Reactome" id="R-MMU-4085001">
    <property type="pathway name" value="Sialic acid metabolism"/>
</dbReference>
<dbReference type="Reactome" id="R-MMU-6798695">
    <property type="pathway name" value="Neutrophil degranulation"/>
</dbReference>
<dbReference type="Reactome" id="R-MMU-9840310">
    <property type="pathway name" value="Glycosphingolipid catabolism"/>
</dbReference>
<dbReference type="SABIO-RK" id="P23780"/>
<dbReference type="BioGRID-ORCS" id="12091">
    <property type="hits" value="3 hits in 82 CRISPR screens"/>
</dbReference>
<dbReference type="ChiTaRS" id="Glb1">
    <property type="organism name" value="mouse"/>
</dbReference>
<dbReference type="PRO" id="PR:P23780"/>
<dbReference type="Proteomes" id="UP000000589">
    <property type="component" value="Chromosome 9"/>
</dbReference>
<dbReference type="RNAct" id="P23780">
    <property type="molecule type" value="protein"/>
</dbReference>
<dbReference type="Bgee" id="ENSMUSG00000045594">
    <property type="expression patterns" value="Expressed in right kidney and 254 other cell types or tissues"/>
</dbReference>
<dbReference type="ExpressionAtlas" id="P23780">
    <property type="expression patterns" value="baseline and differential"/>
</dbReference>
<dbReference type="GO" id="GO:0005737">
    <property type="term" value="C:cytoplasm"/>
    <property type="evidence" value="ECO:0000314"/>
    <property type="project" value="MGI"/>
</dbReference>
<dbReference type="GO" id="GO:0005615">
    <property type="term" value="C:extracellular space"/>
    <property type="evidence" value="ECO:0000314"/>
    <property type="project" value="MGI"/>
</dbReference>
<dbReference type="GO" id="GO:0005794">
    <property type="term" value="C:Golgi apparatus"/>
    <property type="evidence" value="ECO:0007669"/>
    <property type="project" value="Ensembl"/>
</dbReference>
<dbReference type="GO" id="GO:0005764">
    <property type="term" value="C:lysosome"/>
    <property type="evidence" value="ECO:0000314"/>
    <property type="project" value="MGI"/>
</dbReference>
<dbReference type="GO" id="GO:0016020">
    <property type="term" value="C:membrane"/>
    <property type="evidence" value="ECO:0007669"/>
    <property type="project" value="GOC"/>
</dbReference>
<dbReference type="GO" id="GO:0004565">
    <property type="term" value="F:beta-galactosidase activity"/>
    <property type="evidence" value="ECO:0000314"/>
    <property type="project" value="MGI"/>
</dbReference>
<dbReference type="GO" id="GO:0016936">
    <property type="term" value="F:galactoside binding"/>
    <property type="evidence" value="ECO:0007669"/>
    <property type="project" value="Ensembl"/>
</dbReference>
<dbReference type="GO" id="GO:0016787">
    <property type="term" value="F:hydrolase activity"/>
    <property type="evidence" value="ECO:0000314"/>
    <property type="project" value="MGI"/>
</dbReference>
<dbReference type="GO" id="GO:0042803">
    <property type="term" value="F:protein homodimerization activity"/>
    <property type="evidence" value="ECO:0007669"/>
    <property type="project" value="Ensembl"/>
</dbReference>
<dbReference type="GO" id="GO:0019388">
    <property type="term" value="P:galactose catabolic process"/>
    <property type="evidence" value="ECO:0007669"/>
    <property type="project" value="Ensembl"/>
</dbReference>
<dbReference type="GO" id="GO:0006689">
    <property type="term" value="P:ganglioside catabolic process"/>
    <property type="evidence" value="ECO:0000315"/>
    <property type="project" value="FlyBase"/>
</dbReference>
<dbReference type="GO" id="GO:0006516">
    <property type="term" value="P:glycoprotein catabolic process"/>
    <property type="evidence" value="ECO:0000315"/>
    <property type="project" value="FlyBase"/>
</dbReference>
<dbReference type="GO" id="GO:0042340">
    <property type="term" value="P:keratan sulfate proteoglycan catabolic process"/>
    <property type="evidence" value="ECO:0000315"/>
    <property type="project" value="FlyBase"/>
</dbReference>
<dbReference type="GO" id="GO:0051413">
    <property type="term" value="P:response to cortisone"/>
    <property type="evidence" value="ECO:0007669"/>
    <property type="project" value="Ensembl"/>
</dbReference>
<dbReference type="GO" id="GO:1904016">
    <property type="term" value="P:response to Thyroglobulin triiodothyronine"/>
    <property type="evidence" value="ECO:0007669"/>
    <property type="project" value="Ensembl"/>
</dbReference>
<dbReference type="FunFam" id="2.60.120.260:FF:000021">
    <property type="entry name" value="Beta-galactosidase"/>
    <property type="match status" value="1"/>
</dbReference>
<dbReference type="FunFam" id="2.60.120.260:FF:000115">
    <property type="entry name" value="Beta-galactosidase"/>
    <property type="match status" value="1"/>
</dbReference>
<dbReference type="FunFam" id="3.20.20.80:FF:000017">
    <property type="entry name" value="Beta-galactosidase"/>
    <property type="match status" value="1"/>
</dbReference>
<dbReference type="Gene3D" id="2.60.120.260">
    <property type="entry name" value="Galactose-binding domain-like"/>
    <property type="match status" value="2"/>
</dbReference>
<dbReference type="Gene3D" id="3.20.20.80">
    <property type="entry name" value="Glycosidases"/>
    <property type="match status" value="1"/>
</dbReference>
<dbReference type="InterPro" id="IPR026283">
    <property type="entry name" value="B-gal_1-like"/>
</dbReference>
<dbReference type="InterPro" id="IPR048912">
    <property type="entry name" value="BetaGal1-like_ABD1"/>
</dbReference>
<dbReference type="InterPro" id="IPR048913">
    <property type="entry name" value="BetaGal_gal-bd"/>
</dbReference>
<dbReference type="InterPro" id="IPR008979">
    <property type="entry name" value="Galactose-bd-like_sf"/>
</dbReference>
<dbReference type="InterPro" id="IPR031330">
    <property type="entry name" value="Gly_Hdrlase_35_cat"/>
</dbReference>
<dbReference type="InterPro" id="IPR019801">
    <property type="entry name" value="Glyco_hydro_35_CS"/>
</dbReference>
<dbReference type="InterPro" id="IPR001944">
    <property type="entry name" value="Glycoside_Hdrlase_35"/>
</dbReference>
<dbReference type="InterPro" id="IPR017853">
    <property type="entry name" value="Glycoside_hydrolase_SF"/>
</dbReference>
<dbReference type="PANTHER" id="PTHR23421">
    <property type="entry name" value="BETA-GALACTOSIDASE RELATED"/>
    <property type="match status" value="1"/>
</dbReference>
<dbReference type="Pfam" id="PF21317">
    <property type="entry name" value="BetaGal_ABD_1"/>
    <property type="match status" value="1"/>
</dbReference>
<dbReference type="Pfam" id="PF21467">
    <property type="entry name" value="BetaGal_gal-bd"/>
    <property type="match status" value="1"/>
</dbReference>
<dbReference type="Pfam" id="PF01301">
    <property type="entry name" value="Glyco_hydro_35"/>
    <property type="match status" value="1"/>
</dbReference>
<dbReference type="PIRSF" id="PIRSF006336">
    <property type="entry name" value="B-gal"/>
    <property type="match status" value="1"/>
</dbReference>
<dbReference type="PRINTS" id="PR00742">
    <property type="entry name" value="GLHYDRLASE35"/>
</dbReference>
<dbReference type="SUPFAM" id="SSF51445">
    <property type="entry name" value="(Trans)glycosidases"/>
    <property type="match status" value="1"/>
</dbReference>
<dbReference type="SUPFAM" id="SSF49785">
    <property type="entry name" value="Galactose-binding domain-like"/>
    <property type="match status" value="1"/>
</dbReference>
<dbReference type="PROSITE" id="PS01182">
    <property type="entry name" value="GLYCOSYL_HYDROL_F35"/>
    <property type="match status" value="1"/>
</dbReference>
<feature type="signal peptide" evidence="3">
    <location>
        <begin position="1"/>
        <end position="24"/>
    </location>
</feature>
<feature type="propeptide" id="PRO_0000012190" evidence="1">
    <location>
        <begin position="25"/>
        <end position="29"/>
    </location>
</feature>
<feature type="chain" id="PRO_0000012191" description="Beta-galactosidase">
    <location>
        <begin position="30"/>
        <end position="647"/>
    </location>
</feature>
<feature type="active site" description="Proton donor" evidence="2">
    <location>
        <position position="189"/>
    </location>
</feature>
<feature type="active site" description="Nucleophile" evidence="2">
    <location>
        <position position="269"/>
    </location>
</feature>
<feature type="binding site" evidence="2">
    <location>
        <position position="84"/>
    </location>
    <ligand>
        <name>substrate</name>
    </ligand>
</feature>
<feature type="binding site" evidence="2">
    <location>
        <position position="130"/>
    </location>
    <ligand>
        <name>substrate</name>
    </ligand>
</feature>
<feature type="binding site" evidence="2">
    <location>
        <position position="188"/>
    </location>
    <ligand>
        <name>substrate</name>
    </ligand>
</feature>
<feature type="binding site" evidence="2">
    <location>
        <position position="334"/>
    </location>
    <ligand>
        <name>substrate</name>
    </ligand>
</feature>
<feature type="glycosylation site" description="N-linked (GlcNAc...) asparagine" evidence="3">
    <location>
        <position position="27"/>
    </location>
</feature>
<feature type="glycosylation site" description="N-linked (GlcNAc...) asparagine" evidence="3">
    <location>
        <position position="248"/>
    </location>
</feature>
<feature type="glycosylation site" description="N-linked (GlcNAc...) asparagine" evidence="3">
    <location>
        <position position="500"/>
    </location>
</feature>
<feature type="glycosylation site" description="N-linked (GlcNAc...) asparagine" evidence="3">
    <location>
        <position position="504"/>
    </location>
</feature>
<feature type="glycosylation site" description="N-linked (GlcNAc...) asparagine" evidence="3">
    <location>
        <position position="510"/>
    </location>
</feature>
<feature type="glycosylation site" description="N-linked (GlcNAc...) asparagine" evidence="3">
    <location>
        <position position="544"/>
    </location>
</feature>
<feature type="glycosylation site" description="N-linked (GlcNAc...) asparagine" evidence="3">
    <location>
        <position position="557"/>
    </location>
</feature>
<feature type="glycosylation site" description="N-linked (GlcNAc...) asparagine" evidence="3">
    <location>
        <position position="617"/>
    </location>
</feature>
<feature type="disulfide bond" evidence="2">
    <location>
        <begin position="196"/>
        <end position="231"/>
    </location>
</feature>
<feature type="disulfide bond" evidence="2">
    <location>
        <begin position="628"/>
        <end position="636"/>
    </location>
</feature>
<feature type="sequence conflict" description="In Ref. 2; AAA37292." evidence="5" ref="2">
    <original>N</original>
    <variation>D</variation>
    <location>
        <position position="517"/>
    </location>
</feature>
<feature type="sequence conflict" description="In Ref. 2; AAA37292." evidence="5" ref="2">
    <original>G</original>
    <variation>R</variation>
    <location>
        <position position="539"/>
    </location>
</feature>
<proteinExistence type="evidence at protein level"/>
<protein>
    <recommendedName>
        <fullName>Beta-galactosidase</fullName>
        <ecNumber evidence="4">3.2.1.23</ecNumber>
    </recommendedName>
    <alternativeName>
        <fullName>Acid beta-galactosidase</fullName>
        <shortName>Lactase</shortName>
    </alternativeName>
</protein>
<reference key="1">
    <citation type="journal article" date="1990" name="Biochem. Biophys. Res. Commun.">
        <title>Molecular cloning of mouse acid beta-galactosidase cDNA: sequence, expression of catalytic activity and comparison with the human enzyme.</title>
        <authorList>
            <person name="Nanba E."/>
            <person name="Suzuki K."/>
        </authorList>
    </citation>
    <scope>NUCLEOTIDE SEQUENCE [GENOMIC DNA / MRNA]</scope>
    <scope>CATALYTIC ACTIVITY</scope>
    <source>
        <tissue>Brain</tissue>
    </source>
</reference>
<reference key="2">
    <citation type="journal article" date="1991" name="Biochem. Biophys. Res. Commun.">
        <title>Organization of the mouse acid beta-galactosidase gene.</title>
        <authorList>
            <person name="Nanba E."/>
            <person name="Suzuki K."/>
        </authorList>
    </citation>
    <scope>NUCLEOTIDE SEQUENCE [GENOMIC DNA]</scope>
    <source>
        <strain>DBA/2J</strain>
    </source>
</reference>
<reference key="3">
    <citation type="journal article" date="2010" name="Cell">
        <title>A tissue-specific atlas of mouse protein phosphorylation and expression.</title>
        <authorList>
            <person name="Huttlin E.L."/>
            <person name="Jedrychowski M.P."/>
            <person name="Elias J.E."/>
            <person name="Goswami T."/>
            <person name="Rad R."/>
            <person name="Beausoleil S.A."/>
            <person name="Villen J."/>
            <person name="Haas W."/>
            <person name="Sowa M.E."/>
            <person name="Gygi S.P."/>
        </authorList>
    </citation>
    <scope>IDENTIFICATION BY MASS SPECTROMETRY [LARGE SCALE ANALYSIS]</scope>
    <source>
        <tissue>Brain</tissue>
        <tissue>Heart</tissue>
        <tissue>Kidney</tissue>
        <tissue>Liver</tissue>
        <tissue>Lung</tissue>
        <tissue>Pancreas</tissue>
        <tissue>Spleen</tissue>
        <tissue>Testis</tissue>
    </source>
</reference>
<sequence length="647" mass="73121">MLRVPLCTPLPLLALLQLLGAAHGIYNVTQRTFKLDYSRDRFLKDGQPFRYISGSIHYFRIPRFYWEDRLLKMKMAGLNAIQMYVPWNFHEPQPGQYEFSGDRDVEHFIQLAHELGLLVILRPGPYICAEWDMGGLPAWLLEKQSIVLRSSDPDYLVAVDKWLAVLLPKMKPLLYQNGGPIITVQVENEYGSYFACDYDYLRFLVHRFRYHLGNDVILFTTDGASEKMLKCGTLQDLYATVDFGTGNNITQAFLVQRKFEPKGPLINSEFYTGWLDHWGKPHSTVKTKTLATSLYNLLARGANVNLYMFIGGTNFAYWNGANTPYEPQPTSYDYDAPLSEAGDLTKKYFALREVIQMFKEVPEGPIPPSTPKFAYGKVALRKFKTVAEALGILCPNGPVKSLYPLTFTQVKQYFGYVLYRTTLPQDCSNPKPIFSSPFNGVRDRAYVSVDGVPQGILDRNLMTALNIRGKAGATLDILVENMGRVNYGRFINDFKGLISNMTINSTVLTNWTVFPLNTEAMVRNHLWGREASDEGHLDGRSTSNSSDLILPTFYVGNFSIPSGIPDLPQDTFIQFPGWSKGQVWINGFNLGRYWPTMGPQKTLFVPRNILTTSAPNNITVLELEFAPCSEGTPELCTVEFVDTPVIS</sequence>
<evidence type="ECO:0000250" key="1"/>
<evidence type="ECO:0000250" key="2">
    <source>
        <dbReference type="UniProtKB" id="P16278"/>
    </source>
</evidence>
<evidence type="ECO:0000255" key="3"/>
<evidence type="ECO:0000269" key="4">
    <source>
    </source>
</evidence>
<evidence type="ECO:0000305" key="5"/>
<comment type="function">
    <text evidence="2">Cleaves beta-linked terminal galactosyl residues from gangliosides, glycoproteins, and glycosaminoglycans.</text>
</comment>
<comment type="catalytic activity">
    <reaction evidence="4">
        <text>Hydrolysis of terminal non-reducing beta-D-galactose residues in beta-D-galactosides.</text>
        <dbReference type="EC" id="3.2.1.23"/>
    </reaction>
</comment>
<comment type="subunit">
    <text evidence="2">Homodimer. May form higher multimers.</text>
</comment>
<comment type="subcellular location">
    <subcellularLocation>
        <location evidence="2">Lysosome</location>
    </subcellularLocation>
</comment>
<comment type="similarity">
    <text evidence="5">Belongs to the glycosyl hydrolase 35 family.</text>
</comment>
<accession>P23780</accession>
<organism>
    <name type="scientific">Mus musculus</name>
    <name type="common">Mouse</name>
    <dbReference type="NCBI Taxonomy" id="10090"/>
    <lineage>
        <taxon>Eukaryota</taxon>
        <taxon>Metazoa</taxon>
        <taxon>Chordata</taxon>
        <taxon>Craniata</taxon>
        <taxon>Vertebrata</taxon>
        <taxon>Euteleostomi</taxon>
        <taxon>Mammalia</taxon>
        <taxon>Eutheria</taxon>
        <taxon>Euarchontoglires</taxon>
        <taxon>Glires</taxon>
        <taxon>Rodentia</taxon>
        <taxon>Myomorpha</taxon>
        <taxon>Muroidea</taxon>
        <taxon>Muridae</taxon>
        <taxon>Murinae</taxon>
        <taxon>Mus</taxon>
        <taxon>Mus</taxon>
    </lineage>
</organism>
<keyword id="KW-0002">3D-structure</keyword>
<keyword id="KW-1015">Disulfide bond</keyword>
<keyword id="KW-0325">Glycoprotein</keyword>
<keyword id="KW-0326">Glycosidase</keyword>
<keyword id="KW-0378">Hydrolase</keyword>
<keyword id="KW-0458">Lysosome</keyword>
<keyword id="KW-1185">Reference proteome</keyword>
<keyword id="KW-0732">Signal</keyword>
<keyword id="KW-0865">Zymogen</keyword>
<name>BGAL_MOUSE</name>
<gene>
    <name type="primary">Glb1</name>
    <name type="synonym">Bgl</name>
    <name type="synonym">Glb-1</name>
</gene>